<protein>
    <recommendedName>
        <fullName evidence="1">Large ribosomal subunit protein eL8</fullName>
    </recommendedName>
    <alternativeName>
        <fullName evidence="2">50S ribosomal protein L7Ae</fullName>
    </alternativeName>
    <alternativeName>
        <fullName evidence="1">Ribosomal protein L8e</fullName>
    </alternativeName>
</protein>
<accession>B9LPY2</accession>
<gene>
    <name evidence="1" type="primary">rpl7ae</name>
    <name type="ordered locus">Hlac_1842</name>
</gene>
<evidence type="ECO:0000255" key="1">
    <source>
        <dbReference type="HAMAP-Rule" id="MF_00326"/>
    </source>
</evidence>
<evidence type="ECO:0000305" key="2"/>
<proteinExistence type="inferred from homology"/>
<comment type="function">
    <text evidence="1">Multifunctional RNA-binding protein that recognizes the K-turn motif in ribosomal RNA, the RNA component of RNase P, box H/ACA, box C/D and box C'/D' sRNAs.</text>
</comment>
<comment type="subunit">
    <text evidence="1">Part of the 50S ribosomal subunit. Probably part of the RNase P complex.</text>
</comment>
<comment type="subcellular location">
    <subcellularLocation>
        <location evidence="1">Cytoplasm</location>
    </subcellularLocation>
</comment>
<comment type="similarity">
    <text evidence="1">Belongs to the eukaryotic ribosomal protein eL8 family.</text>
</comment>
<feature type="chain" id="PRO_1000194096" description="Large ribosomal subunit protein eL8">
    <location>
        <begin position="1"/>
        <end position="120"/>
    </location>
</feature>
<keyword id="KW-0963">Cytoplasm</keyword>
<keyword id="KW-1185">Reference proteome</keyword>
<keyword id="KW-0687">Ribonucleoprotein</keyword>
<keyword id="KW-0689">Ribosomal protein</keyword>
<keyword id="KW-0694">RNA-binding</keyword>
<keyword id="KW-0699">rRNA-binding</keyword>
<keyword id="KW-0819">tRNA processing</keyword>
<reference key="1">
    <citation type="journal article" date="2016" name="Stand. Genomic Sci.">
        <title>Complete genome sequence of the Antarctic Halorubrum lacusprofundi type strain ACAM 34.</title>
        <authorList>
            <person name="Anderson I.J."/>
            <person name="DasSarma P."/>
            <person name="Lucas S."/>
            <person name="Copeland A."/>
            <person name="Lapidus A."/>
            <person name="Del Rio T.G."/>
            <person name="Tice H."/>
            <person name="Dalin E."/>
            <person name="Bruce D.C."/>
            <person name="Goodwin L."/>
            <person name="Pitluck S."/>
            <person name="Sims D."/>
            <person name="Brettin T.S."/>
            <person name="Detter J.C."/>
            <person name="Han C.S."/>
            <person name="Larimer F."/>
            <person name="Hauser L."/>
            <person name="Land M."/>
            <person name="Ivanova N."/>
            <person name="Richardson P."/>
            <person name="Cavicchioli R."/>
            <person name="DasSarma S."/>
            <person name="Woese C.R."/>
            <person name="Kyrpides N.C."/>
        </authorList>
    </citation>
    <scope>NUCLEOTIDE SEQUENCE [LARGE SCALE GENOMIC DNA]</scope>
    <source>
        <strain>ATCC 49239 / DSM 5036 / JCM 8891 / ACAM 34</strain>
    </source>
</reference>
<organism>
    <name type="scientific">Halorubrum lacusprofundi (strain ATCC 49239 / DSM 5036 / JCM 8891 / ACAM 34)</name>
    <dbReference type="NCBI Taxonomy" id="416348"/>
    <lineage>
        <taxon>Archaea</taxon>
        <taxon>Methanobacteriati</taxon>
        <taxon>Methanobacteriota</taxon>
        <taxon>Stenosarchaea group</taxon>
        <taxon>Halobacteria</taxon>
        <taxon>Halobacteriales</taxon>
        <taxon>Haloferacaceae</taxon>
        <taxon>Halorubrum</taxon>
    </lineage>
</organism>
<name>RL7A_HALLT</name>
<dbReference type="EMBL" id="CP001365">
    <property type="protein sequence ID" value="ACM57420.1"/>
    <property type="molecule type" value="Genomic_DNA"/>
</dbReference>
<dbReference type="RefSeq" id="WP_004046475.1">
    <property type="nucleotide sequence ID" value="NC_012029.1"/>
</dbReference>
<dbReference type="SMR" id="B9LPY2"/>
<dbReference type="GeneID" id="7400034"/>
<dbReference type="KEGG" id="hla:Hlac_1842"/>
<dbReference type="eggNOG" id="arCOG01751">
    <property type="taxonomic scope" value="Archaea"/>
</dbReference>
<dbReference type="HOGENOM" id="CLU_084513_4_0_2"/>
<dbReference type="Proteomes" id="UP000000740">
    <property type="component" value="Chromosome 1"/>
</dbReference>
<dbReference type="GO" id="GO:0005737">
    <property type="term" value="C:cytoplasm"/>
    <property type="evidence" value="ECO:0007669"/>
    <property type="project" value="UniProtKB-SubCell"/>
</dbReference>
<dbReference type="GO" id="GO:1990904">
    <property type="term" value="C:ribonucleoprotein complex"/>
    <property type="evidence" value="ECO:0007669"/>
    <property type="project" value="UniProtKB-KW"/>
</dbReference>
<dbReference type="GO" id="GO:0005840">
    <property type="term" value="C:ribosome"/>
    <property type="evidence" value="ECO:0007669"/>
    <property type="project" value="UniProtKB-KW"/>
</dbReference>
<dbReference type="GO" id="GO:0004526">
    <property type="term" value="F:ribonuclease P activity"/>
    <property type="evidence" value="ECO:0007669"/>
    <property type="project" value="UniProtKB-UniRule"/>
</dbReference>
<dbReference type="GO" id="GO:0019843">
    <property type="term" value="F:rRNA binding"/>
    <property type="evidence" value="ECO:0007669"/>
    <property type="project" value="UniProtKB-KW"/>
</dbReference>
<dbReference type="GO" id="GO:0003735">
    <property type="term" value="F:structural constituent of ribosome"/>
    <property type="evidence" value="ECO:0007669"/>
    <property type="project" value="InterPro"/>
</dbReference>
<dbReference type="GO" id="GO:0006412">
    <property type="term" value="P:translation"/>
    <property type="evidence" value="ECO:0007669"/>
    <property type="project" value="UniProtKB-UniRule"/>
</dbReference>
<dbReference type="GO" id="GO:0001682">
    <property type="term" value="P:tRNA 5'-leader removal"/>
    <property type="evidence" value="ECO:0007669"/>
    <property type="project" value="UniProtKB-UniRule"/>
</dbReference>
<dbReference type="FunFam" id="3.30.1330.30:FF:000020">
    <property type="entry name" value="50S ribosomal protein L7Ae"/>
    <property type="match status" value="1"/>
</dbReference>
<dbReference type="Gene3D" id="3.30.1330.30">
    <property type="match status" value="1"/>
</dbReference>
<dbReference type="HAMAP" id="MF_00326">
    <property type="entry name" value="Ribosomal_eL8"/>
    <property type="match status" value="1"/>
</dbReference>
<dbReference type="InterPro" id="IPR029064">
    <property type="entry name" value="Ribosomal_eL30-like_sf"/>
</dbReference>
<dbReference type="InterPro" id="IPR004038">
    <property type="entry name" value="Ribosomal_eL8/eL30/eS12/Gad45"/>
</dbReference>
<dbReference type="InterPro" id="IPR018492">
    <property type="entry name" value="Ribosomal_eL8/Nhp2"/>
</dbReference>
<dbReference type="InterPro" id="IPR022481">
    <property type="entry name" value="Ribosomal_eL8_arc"/>
</dbReference>
<dbReference type="NCBIfam" id="TIGR03677">
    <property type="entry name" value="eL8_ribo"/>
    <property type="match status" value="1"/>
</dbReference>
<dbReference type="Pfam" id="PF01248">
    <property type="entry name" value="Ribosomal_L7Ae"/>
    <property type="match status" value="1"/>
</dbReference>
<dbReference type="PRINTS" id="PR00881">
    <property type="entry name" value="L7ARS6FAMILY"/>
</dbReference>
<dbReference type="PRINTS" id="PR00884">
    <property type="entry name" value="RIBOSOMALHS6"/>
</dbReference>
<dbReference type="SUPFAM" id="SSF55315">
    <property type="entry name" value="L30e-like"/>
    <property type="match status" value="1"/>
</dbReference>
<sequence>MPVYVDYETPADLAERSLEALEVARDTGTVKKGTNETTKAVERGNADLVIVAEDVSPEEIVMHLPELAEEKGIPVVFVDTQDEVGHAAGLEVGSAAAAVIDAGDADDDVEDIGEKVAELR</sequence>